<name>OVGP1_BOVIN</name>
<protein>
    <recommendedName>
        <fullName>Oviduct-specific glycoprotein</fullName>
    </recommendedName>
    <alternativeName>
        <fullName>Estrogen-dependent oviduct protein</fullName>
    </alternativeName>
    <alternativeName>
        <fullName>Oviductal glycoprotein</fullName>
    </alternativeName>
    <alternativeName>
        <fullName>Oviductin</fullName>
    </alternativeName>
</protein>
<proteinExistence type="evidence at protein level"/>
<sequence length="537" mass="59618">LLLCVGLLLVLKHHDGAAHKLVCYFTNWAFSRPGPASILPRDLDPFLCTHLVFAFASMSNNQIVPKDPQDEKILYPEFNKLKERNRGLKTLLSIGGWNFGTVRFTTMLSTFSNRERFVSSVIALLRTHGFDGLDLFFLYPGLRGSPARDRWTFVFLLEELLQAFKNEAQLTMRPRLLLSAAVSGDPHVVQKAYEARLLGRLLDFISVLSYDLHGSWEKVTGHNSPLFSLPGDPKSSAYAMNYWRQLGVPPEKLLMGLPTYGRTFHLLKASQNELRAQAVGPASPGKYTKQAGFLAYYEICCFVRRAKKRWINDQYVPYAFKGKEWVGYDDAISFGYKAFFIKREHFGGAMVWTLDLDDFRGYFCGTGPFPLVHTLNNLLVNDEFSSTPSPKFWFSTAVNSSRIGPEMPTMTRDLTTGLGILPPGGEAVATETHRKSETMTITPKGEIATPTRTPLSFGRHTAAPEGKTESPGEKPLTTVGHLAVSPGGIAVGPVRLQTGQKVTPPGRKAGVPEKVTTPSGKMTVTPDGRAETLERRL</sequence>
<gene>
    <name type="primary">OVGP1</name>
    <name type="synonym">OGP</name>
</gene>
<dbReference type="EMBL" id="D16639">
    <property type="protein sequence ID" value="BAA04065.1"/>
    <property type="molecule type" value="mRNA"/>
</dbReference>
<dbReference type="PIR" id="S57197">
    <property type="entry name" value="S57197"/>
</dbReference>
<dbReference type="SMR" id="Q28042"/>
<dbReference type="FunCoup" id="Q28042">
    <property type="interactions" value="85"/>
</dbReference>
<dbReference type="STRING" id="9913.ENSBTAP00000046210"/>
<dbReference type="CAZy" id="GH18">
    <property type="family name" value="Glycoside Hydrolase Family 18"/>
</dbReference>
<dbReference type="GlyCosmos" id="Q28042">
    <property type="glycosylation" value="1 site, No reported glycans"/>
</dbReference>
<dbReference type="GlyGen" id="Q28042">
    <property type="glycosylation" value="1 site"/>
</dbReference>
<dbReference type="PaxDb" id="9913-ENSBTAP00000046210"/>
<dbReference type="eggNOG" id="KOG2806">
    <property type="taxonomic scope" value="Eukaryota"/>
</dbReference>
<dbReference type="InParanoid" id="Q28042"/>
<dbReference type="OrthoDB" id="76388at2759"/>
<dbReference type="Proteomes" id="UP000009136">
    <property type="component" value="Unplaced"/>
</dbReference>
<dbReference type="GO" id="GO:0005576">
    <property type="term" value="C:extracellular region"/>
    <property type="evidence" value="ECO:0000318"/>
    <property type="project" value="GO_Central"/>
</dbReference>
<dbReference type="GO" id="GO:0030133">
    <property type="term" value="C:transport vesicle"/>
    <property type="evidence" value="ECO:0007669"/>
    <property type="project" value="UniProtKB-SubCell"/>
</dbReference>
<dbReference type="GO" id="GO:0008061">
    <property type="term" value="F:chitin binding"/>
    <property type="evidence" value="ECO:0007669"/>
    <property type="project" value="InterPro"/>
</dbReference>
<dbReference type="GO" id="GO:0004568">
    <property type="term" value="F:chitinase activity"/>
    <property type="evidence" value="ECO:0000318"/>
    <property type="project" value="GO_Central"/>
</dbReference>
<dbReference type="GO" id="GO:0005975">
    <property type="term" value="P:carbohydrate metabolic process"/>
    <property type="evidence" value="ECO:0007669"/>
    <property type="project" value="InterPro"/>
</dbReference>
<dbReference type="GO" id="GO:0006032">
    <property type="term" value="P:chitin catabolic process"/>
    <property type="evidence" value="ECO:0000318"/>
    <property type="project" value="GO_Central"/>
</dbReference>
<dbReference type="GO" id="GO:0007338">
    <property type="term" value="P:single fertilization"/>
    <property type="evidence" value="ECO:0007669"/>
    <property type="project" value="UniProtKB-KW"/>
</dbReference>
<dbReference type="CDD" id="cd02872">
    <property type="entry name" value="GH18_chitolectin_chitotriosidase"/>
    <property type="match status" value="1"/>
</dbReference>
<dbReference type="FunFam" id="3.20.20.80:FF:000007">
    <property type="entry name" value="Acidic mammalian chitinase"/>
    <property type="match status" value="1"/>
</dbReference>
<dbReference type="FunFam" id="3.10.50.10:FF:000001">
    <property type="entry name" value="Chitinase 3-like 1"/>
    <property type="match status" value="1"/>
</dbReference>
<dbReference type="Gene3D" id="3.10.50.10">
    <property type="match status" value="1"/>
</dbReference>
<dbReference type="Gene3D" id="3.20.20.80">
    <property type="entry name" value="Glycosidases"/>
    <property type="match status" value="1"/>
</dbReference>
<dbReference type="InterPro" id="IPR011583">
    <property type="entry name" value="Chitinase_II/V-like_cat"/>
</dbReference>
<dbReference type="InterPro" id="IPR029070">
    <property type="entry name" value="Chitinase_insertion_sf"/>
</dbReference>
<dbReference type="InterPro" id="IPR001223">
    <property type="entry name" value="Glyco_hydro18_cat"/>
</dbReference>
<dbReference type="InterPro" id="IPR017853">
    <property type="entry name" value="Glycoside_hydrolase_SF"/>
</dbReference>
<dbReference type="InterPro" id="IPR050314">
    <property type="entry name" value="Glycosyl_Hydrlase_18"/>
</dbReference>
<dbReference type="PANTHER" id="PTHR11177">
    <property type="entry name" value="CHITINASE"/>
    <property type="match status" value="1"/>
</dbReference>
<dbReference type="PANTHER" id="PTHR11177:SF385">
    <property type="entry name" value="OVIDUCT-SPECIFIC GLYCOPROTEIN"/>
    <property type="match status" value="1"/>
</dbReference>
<dbReference type="Pfam" id="PF00704">
    <property type="entry name" value="Glyco_hydro_18"/>
    <property type="match status" value="1"/>
</dbReference>
<dbReference type="SMART" id="SM00636">
    <property type="entry name" value="Glyco_18"/>
    <property type="match status" value="1"/>
</dbReference>
<dbReference type="SUPFAM" id="SSF51445">
    <property type="entry name" value="(Trans)glycosidases"/>
    <property type="match status" value="1"/>
</dbReference>
<dbReference type="SUPFAM" id="SSF54556">
    <property type="entry name" value="Chitinase insertion domain"/>
    <property type="match status" value="1"/>
</dbReference>
<dbReference type="PROSITE" id="PS51910">
    <property type="entry name" value="GH18_2"/>
    <property type="match status" value="1"/>
</dbReference>
<organism>
    <name type="scientific">Bos taurus</name>
    <name type="common">Bovine</name>
    <dbReference type="NCBI Taxonomy" id="9913"/>
    <lineage>
        <taxon>Eukaryota</taxon>
        <taxon>Metazoa</taxon>
        <taxon>Chordata</taxon>
        <taxon>Craniata</taxon>
        <taxon>Vertebrata</taxon>
        <taxon>Euteleostomi</taxon>
        <taxon>Mammalia</taxon>
        <taxon>Eutheria</taxon>
        <taxon>Laurasiatheria</taxon>
        <taxon>Artiodactyla</taxon>
        <taxon>Ruminantia</taxon>
        <taxon>Pecora</taxon>
        <taxon>Bovidae</taxon>
        <taxon>Bovinae</taxon>
        <taxon>Bos</taxon>
    </lineage>
</organism>
<feature type="signal peptide" evidence="4">
    <location>
        <begin position="1" status="less than"/>
        <end position="18"/>
    </location>
</feature>
<feature type="chain" id="PRO_0000011972" description="Oviduct-specific glycoprotein">
    <location>
        <begin position="19"/>
        <end position="537"/>
    </location>
</feature>
<feature type="domain" description="GH18" evidence="2">
    <location>
        <begin position="19"/>
        <end position="382"/>
    </location>
</feature>
<feature type="region of interest" description="Disordered" evidence="3">
    <location>
        <begin position="446"/>
        <end position="475"/>
    </location>
</feature>
<feature type="region of interest" description="Disordered" evidence="3">
    <location>
        <begin position="498"/>
        <end position="537"/>
    </location>
</feature>
<feature type="compositionally biased region" description="Basic and acidic residues" evidence="3">
    <location>
        <begin position="528"/>
        <end position="537"/>
    </location>
</feature>
<feature type="binding site" evidence="2">
    <location>
        <begin position="68"/>
        <end position="69"/>
    </location>
    <ligand>
        <name>chitin</name>
        <dbReference type="ChEBI" id="CHEBI:17029"/>
    </ligand>
</feature>
<feature type="binding site" evidence="2">
    <location>
        <begin position="95"/>
        <end position="98"/>
    </location>
    <ligand>
        <name>chitin</name>
        <dbReference type="ChEBI" id="CHEBI:17029"/>
    </ligand>
</feature>
<feature type="binding site" evidence="2">
    <location>
        <position position="139"/>
    </location>
    <ligand>
        <name>chitin</name>
        <dbReference type="ChEBI" id="CHEBI:17029"/>
    </ligand>
</feature>
<feature type="binding site" evidence="2">
    <location>
        <begin position="208"/>
        <end position="211"/>
    </location>
    <ligand>
        <name>chitin</name>
        <dbReference type="ChEBI" id="CHEBI:17029"/>
    </ligand>
</feature>
<feature type="binding site" evidence="2">
    <location>
        <position position="352"/>
    </location>
    <ligand>
        <name>chitin</name>
        <dbReference type="ChEBI" id="CHEBI:17029"/>
    </ligand>
</feature>
<feature type="glycosylation site" description="N-linked (GlcNAc...) asparagine" evidence="1">
    <location>
        <position position="399"/>
    </location>
</feature>
<feature type="disulfide bond" evidence="2">
    <location>
        <begin position="23"/>
        <end position="48"/>
    </location>
</feature>
<feature type="non-terminal residue">
    <location>
        <position position="1"/>
    </location>
</feature>
<comment type="function">
    <text>Binds to oocyte zona pellucida in vivo. May play a role in the fertilization process and/or early embryonic development.</text>
</comment>
<comment type="subcellular location">
    <subcellularLocation>
        <location>Cytoplasmic vesicle</location>
        <location>Secretory vesicle</location>
    </subcellularLocation>
    <text>Secretory granules.</text>
</comment>
<comment type="tissue specificity">
    <text>Oviduct.</text>
</comment>
<comment type="similarity">
    <text evidence="5">Belongs to the glycosyl hydrolase 18 family.</text>
</comment>
<keyword id="KW-0968">Cytoplasmic vesicle</keyword>
<keyword id="KW-0903">Direct protein sequencing</keyword>
<keyword id="KW-1015">Disulfide bond</keyword>
<keyword id="KW-0278">Fertilization</keyword>
<keyword id="KW-0325">Glycoprotein</keyword>
<keyword id="KW-1185">Reference proteome</keyword>
<keyword id="KW-0732">Signal</keyword>
<reference key="1">
    <citation type="journal article" date="1994" name="Biol. Reprod.">
        <title>Purification and molecular cloning of bovine oviduct-specific glycoprotein.</title>
        <authorList>
            <person name="Sendai Y."/>
            <person name="Abe H."/>
            <person name="Kikuchi M."/>
            <person name="Satoh T."/>
            <person name="Hoshi H."/>
        </authorList>
    </citation>
    <scope>NUCLEOTIDE SEQUENCE [MRNA]</scope>
    <scope>PROTEIN SEQUENCE OF 19-47</scope>
    <source>
        <tissue>Oviduct</tissue>
    </source>
</reference>
<accession>Q28042</accession>
<evidence type="ECO:0000255" key="1"/>
<evidence type="ECO:0000255" key="2">
    <source>
        <dbReference type="PROSITE-ProRule" id="PRU01258"/>
    </source>
</evidence>
<evidence type="ECO:0000256" key="3">
    <source>
        <dbReference type="SAM" id="MobiDB-lite"/>
    </source>
</evidence>
<evidence type="ECO:0000269" key="4">
    <source>
    </source>
</evidence>
<evidence type="ECO:0000305" key="5"/>